<protein>
    <recommendedName>
        <fullName>Uncharacterized protein E146L</fullName>
        <shortName>pE146L</shortName>
    </recommendedName>
</protein>
<evidence type="ECO:0000250" key="1">
    <source>
        <dbReference type="UniProtKB" id="Q65197"/>
    </source>
</evidence>
<evidence type="ECO:0000255" key="2"/>
<evidence type="ECO:0000305" key="3"/>
<keyword id="KW-1043">Host membrane</keyword>
<keyword id="KW-0472">Membrane</keyword>
<keyword id="KW-0812">Transmembrane</keyword>
<keyword id="KW-1133">Transmembrane helix</keyword>
<keyword id="KW-0946">Virion</keyword>
<reference key="1">
    <citation type="journal article" date="1994" name="J. Gen. Virol.">
        <title>Nucleotide sequence of a 55 kbp region from the right end of the genome of a pathogenic African swine fever virus isolate (Malawi LIL20/1).</title>
        <authorList>
            <person name="Dixon L.K."/>
            <person name="Twigg S.R.F."/>
            <person name="Baylis S.A."/>
            <person name="Vydelingum S."/>
            <person name="Bristow C."/>
            <person name="Hammond J.M."/>
            <person name="Smith G.L."/>
        </authorList>
    </citation>
    <scope>NUCLEOTIDE SEQUENCE [GENOMIC DNA]</scope>
</reference>
<reference key="2">
    <citation type="submission" date="2003-03" db="EMBL/GenBank/DDBJ databases">
        <title>African swine fever virus genomes.</title>
        <authorList>
            <person name="Kutish G.F."/>
            <person name="Rock D.L."/>
        </authorList>
    </citation>
    <scope>NUCLEOTIDE SEQUENCE [LARGE SCALE GENOMIC DNA]</scope>
</reference>
<name>VF146_ASFM2</name>
<accession>Q65240</accession>
<sequence length="146" mass="16080">MGGTTDFVLSITIVLVILIIIAFIWYNFTGWSPFKYSKGNTVTFKTPDESSIAYMRFKNCVFTFTDPKGSLHSVDVTNVLNNMAKGFRDAQNPPSSFTLGGHCQAPLNAFSFILPGVNDRATVATADEAKKWENCDATLTGLQRII</sequence>
<proteinExistence type="inferred from homology"/>
<gene>
    <name type="ordered locus">Mal-137</name>
    <name type="ORF">j16L</name>
</gene>
<dbReference type="EMBL" id="X71982">
    <property type="protein sequence ID" value="CAA50836.1"/>
    <property type="status" value="ALT_FRAME"/>
    <property type="molecule type" value="Genomic_DNA"/>
</dbReference>
<dbReference type="EMBL" id="AY261361">
    <property type="status" value="NOT_ANNOTATED_CDS"/>
    <property type="molecule type" value="Genomic_DNA"/>
</dbReference>
<dbReference type="SMR" id="Q65240"/>
<dbReference type="Proteomes" id="UP000000860">
    <property type="component" value="Segment"/>
</dbReference>
<dbReference type="GO" id="GO:0033644">
    <property type="term" value="C:host cell membrane"/>
    <property type="evidence" value="ECO:0007669"/>
    <property type="project" value="UniProtKB-SubCell"/>
</dbReference>
<dbReference type="GO" id="GO:0016020">
    <property type="term" value="C:membrane"/>
    <property type="evidence" value="ECO:0007669"/>
    <property type="project" value="UniProtKB-KW"/>
</dbReference>
<dbReference type="GO" id="GO:0044423">
    <property type="term" value="C:virion component"/>
    <property type="evidence" value="ECO:0007669"/>
    <property type="project" value="UniProtKB-KW"/>
</dbReference>
<feature type="chain" id="PRO_0000373526" description="Uncharacterized protein E146L">
    <location>
        <begin position="1"/>
        <end position="146"/>
    </location>
</feature>
<feature type="transmembrane region" description="Helical" evidence="2">
    <location>
        <begin position="7"/>
        <end position="27"/>
    </location>
</feature>
<feature type="sequence conflict" description="In Ref. 1; CAA50836." evidence="3" ref="1">
    <original>LNA</original>
    <variation>ER</variation>
    <location>
        <begin position="107"/>
        <end position="109"/>
    </location>
</feature>
<comment type="subcellular location">
    <subcellularLocation>
        <location evidence="3">Host membrane</location>
        <topology evidence="3">Single-pass membrane protein</topology>
    </subcellularLocation>
    <subcellularLocation>
        <location evidence="1">Virion</location>
    </subcellularLocation>
</comment>
<comment type="induction">
    <text evidence="3">Expressed in the late phase of the viral replicative cycle.</text>
</comment>
<comment type="similarity">
    <text evidence="3">Belongs to the asfivirus E146L family.</text>
</comment>
<comment type="sequence caution" evidence="3">
    <conflict type="frameshift">
        <sequence resource="EMBL-CDS" id="CAA50836"/>
    </conflict>
</comment>
<organismHost>
    <name type="scientific">Ornithodoros</name>
    <name type="common">relapsing fever ticks</name>
    <dbReference type="NCBI Taxonomy" id="6937"/>
</organismHost>
<organismHost>
    <name type="scientific">Phacochoerus aethiopicus</name>
    <name type="common">Warthog</name>
    <dbReference type="NCBI Taxonomy" id="85517"/>
</organismHost>
<organismHost>
    <name type="scientific">Phacochoerus africanus</name>
    <name type="common">Warthog</name>
    <dbReference type="NCBI Taxonomy" id="41426"/>
</organismHost>
<organismHost>
    <name type="scientific">Potamochoerus larvatus</name>
    <name type="common">Bushpig</name>
    <dbReference type="NCBI Taxonomy" id="273792"/>
</organismHost>
<organismHost>
    <name type="scientific">Sus scrofa</name>
    <name type="common">Pig</name>
    <dbReference type="NCBI Taxonomy" id="9823"/>
</organismHost>
<organism>
    <name type="scientific">African swine fever virus (isolate Tick/Malawi/Lil 20-1/1983)</name>
    <name type="common">ASFV</name>
    <dbReference type="NCBI Taxonomy" id="10500"/>
    <lineage>
        <taxon>Viruses</taxon>
        <taxon>Varidnaviria</taxon>
        <taxon>Bamfordvirae</taxon>
        <taxon>Nucleocytoviricota</taxon>
        <taxon>Pokkesviricetes</taxon>
        <taxon>Asfuvirales</taxon>
        <taxon>Asfarviridae</taxon>
        <taxon>Asfivirus</taxon>
        <taxon>African swine fever virus</taxon>
    </lineage>
</organism>